<accession>C3MVF4</accession>
<feature type="chain" id="PRO_1000205383" description="Small ribosomal subunit protein eS1">
    <location>
        <begin position="1"/>
        <end position="208"/>
    </location>
</feature>
<reference key="1">
    <citation type="journal article" date="2009" name="Proc. Natl. Acad. Sci. U.S.A.">
        <title>Biogeography of the Sulfolobus islandicus pan-genome.</title>
        <authorList>
            <person name="Reno M.L."/>
            <person name="Held N.L."/>
            <person name="Fields C.J."/>
            <person name="Burke P.V."/>
            <person name="Whitaker R.J."/>
        </authorList>
    </citation>
    <scope>NUCLEOTIDE SEQUENCE [LARGE SCALE GENOMIC DNA]</scope>
    <source>
        <strain>M.14.25 / Kamchatka #1</strain>
    </source>
</reference>
<organism>
    <name type="scientific">Saccharolobus islandicus (strain M.14.25 / Kamchatka #1)</name>
    <name type="common">Sulfolobus islandicus</name>
    <dbReference type="NCBI Taxonomy" id="427317"/>
    <lineage>
        <taxon>Archaea</taxon>
        <taxon>Thermoproteota</taxon>
        <taxon>Thermoprotei</taxon>
        <taxon>Sulfolobales</taxon>
        <taxon>Sulfolobaceae</taxon>
        <taxon>Saccharolobus</taxon>
    </lineage>
</organism>
<sequence>MSAKGGTIKDKWKMKKWYSIIAPKVFGEVSLGSTPAYDVTQTIGRRVETTLYDLTGDFSQVYVHLYFKIVSNEGDRLITRFVGHELSRDYLRSLIRRKSSKVNSVFDVTTKDGYVVRVKGLVLTTYKCHQSQKTAIRKIINETISKKASELTFDDFTQEVVFGRLANEIFEATKKIYPLRKAEIEKTKVLKVPENLGKQVESSSVSSG</sequence>
<gene>
    <name evidence="1" type="primary">rps3ae</name>
    <name type="ordered locus">M1425_1396</name>
</gene>
<evidence type="ECO:0000255" key="1">
    <source>
        <dbReference type="HAMAP-Rule" id="MF_00359"/>
    </source>
</evidence>
<evidence type="ECO:0000305" key="2"/>
<dbReference type="EMBL" id="CP001400">
    <property type="protein sequence ID" value="ACP38149.1"/>
    <property type="molecule type" value="Genomic_DNA"/>
</dbReference>
<dbReference type="RefSeq" id="WP_012711394.1">
    <property type="nucleotide sequence ID" value="NC_012588.1"/>
</dbReference>
<dbReference type="SMR" id="C3MVF4"/>
<dbReference type="KEGG" id="sia:M1425_1396"/>
<dbReference type="HOGENOM" id="CLU_062507_1_0_2"/>
<dbReference type="Proteomes" id="UP000001350">
    <property type="component" value="Chromosome"/>
</dbReference>
<dbReference type="GO" id="GO:1990904">
    <property type="term" value="C:ribonucleoprotein complex"/>
    <property type="evidence" value="ECO:0007669"/>
    <property type="project" value="UniProtKB-KW"/>
</dbReference>
<dbReference type="GO" id="GO:0005840">
    <property type="term" value="C:ribosome"/>
    <property type="evidence" value="ECO:0007669"/>
    <property type="project" value="UniProtKB-KW"/>
</dbReference>
<dbReference type="GO" id="GO:0003735">
    <property type="term" value="F:structural constituent of ribosome"/>
    <property type="evidence" value="ECO:0007669"/>
    <property type="project" value="InterPro"/>
</dbReference>
<dbReference type="GO" id="GO:0006412">
    <property type="term" value="P:translation"/>
    <property type="evidence" value="ECO:0007669"/>
    <property type="project" value="UniProtKB-UniRule"/>
</dbReference>
<dbReference type="HAMAP" id="MF_00359">
    <property type="entry name" value="Ribosomal_eS1"/>
    <property type="match status" value="1"/>
</dbReference>
<dbReference type="InterPro" id="IPR001593">
    <property type="entry name" value="Ribosomal_eS1"/>
</dbReference>
<dbReference type="InterPro" id="IPR030838">
    <property type="entry name" value="Ribosomal_eS1_arc"/>
</dbReference>
<dbReference type="NCBIfam" id="NF003142">
    <property type="entry name" value="PRK04057.1"/>
    <property type="match status" value="1"/>
</dbReference>
<dbReference type="PANTHER" id="PTHR11830">
    <property type="entry name" value="40S RIBOSOMAL PROTEIN S3A"/>
    <property type="match status" value="1"/>
</dbReference>
<dbReference type="Pfam" id="PF01015">
    <property type="entry name" value="Ribosomal_S3Ae"/>
    <property type="match status" value="1"/>
</dbReference>
<dbReference type="SMART" id="SM01397">
    <property type="entry name" value="Ribosomal_S3Ae"/>
    <property type="match status" value="1"/>
</dbReference>
<proteinExistence type="inferred from homology"/>
<comment type="similarity">
    <text evidence="1">Belongs to the eukaryotic ribosomal protein eS1 family.</text>
</comment>
<keyword id="KW-0687">Ribonucleoprotein</keyword>
<keyword id="KW-0689">Ribosomal protein</keyword>
<name>RS3A_SACI4</name>
<protein>
    <recommendedName>
        <fullName evidence="1">Small ribosomal subunit protein eS1</fullName>
    </recommendedName>
    <alternativeName>
        <fullName evidence="2">30S ribosomal protein S3Ae</fullName>
    </alternativeName>
    <alternativeName>
        <fullName evidence="1">Ribosomal protein S1e</fullName>
    </alternativeName>
</protein>